<keyword id="KW-0175">Coiled coil</keyword>
<keyword id="KW-0436">Ligase</keyword>
<dbReference type="EC" id="6.-.-.-" evidence="1"/>
<dbReference type="EMBL" id="AP009351">
    <property type="protein sequence ID" value="BAF67359.1"/>
    <property type="molecule type" value="Genomic_DNA"/>
</dbReference>
<dbReference type="RefSeq" id="WP_000340475.1">
    <property type="nucleotide sequence ID" value="NZ_JBBIAE010000001.1"/>
</dbReference>
<dbReference type="SMR" id="A6QG77"/>
<dbReference type="KEGG" id="sae:NWMN_1087"/>
<dbReference type="HOGENOM" id="CLU_022249_0_0_9"/>
<dbReference type="Proteomes" id="UP000006386">
    <property type="component" value="Chromosome"/>
</dbReference>
<dbReference type="GO" id="GO:0016874">
    <property type="term" value="F:ligase activity"/>
    <property type="evidence" value="ECO:0007669"/>
    <property type="project" value="UniProtKB-UniRule"/>
</dbReference>
<dbReference type="HAMAP" id="MF_01867">
    <property type="entry name" value="BshC"/>
    <property type="match status" value="1"/>
</dbReference>
<dbReference type="InterPro" id="IPR011199">
    <property type="entry name" value="Bacillithiol_biosynth_BshC"/>
</dbReference>
<dbReference type="InterPro" id="IPR055399">
    <property type="entry name" value="CC_BshC"/>
</dbReference>
<dbReference type="InterPro" id="IPR055398">
    <property type="entry name" value="Rossmann-like_BshC"/>
</dbReference>
<dbReference type="NCBIfam" id="TIGR03998">
    <property type="entry name" value="thiol_BshC"/>
    <property type="match status" value="1"/>
</dbReference>
<dbReference type="Pfam" id="PF24850">
    <property type="entry name" value="CC_BshC"/>
    <property type="match status" value="1"/>
</dbReference>
<dbReference type="Pfam" id="PF10079">
    <property type="entry name" value="Rossmann-like_BshC"/>
    <property type="match status" value="1"/>
</dbReference>
<dbReference type="PIRSF" id="PIRSF012535">
    <property type="entry name" value="UCP012535"/>
    <property type="match status" value="1"/>
</dbReference>
<organism>
    <name type="scientific">Staphylococcus aureus (strain Newman)</name>
    <dbReference type="NCBI Taxonomy" id="426430"/>
    <lineage>
        <taxon>Bacteria</taxon>
        <taxon>Bacillati</taxon>
        <taxon>Bacillota</taxon>
        <taxon>Bacilli</taxon>
        <taxon>Bacillales</taxon>
        <taxon>Staphylococcaceae</taxon>
        <taxon>Staphylococcus</taxon>
    </lineage>
</organism>
<sequence>MDCKVVSLNEKDQFIPKIKSSDPVITGLFQYDAAQQTSFEKRMSKENNGREAALANVIREYMSDLKLSSEQELNIQHLANGSKVVIGGQQAGLFGGPLYTFHKIFSIITLSKELTDTHKQQVVPVFWIAGEDHDFDEVNHTFVYNENHGSLHKVKYHTMEMPETTVSRYYPDKAELKQTLKTMFIHMKETVHTQGLLEICDRIIDQYDSWTDMFKALLHETFKAYGVLFIDAQFEPLRKMEAPMFKKILKKHQLLDDAFRATQQRTQNQGLNAMIQTDTNVHLFLHDENMRQLVSYDGKHFKLNKTDKTYIKEEIINIAENQPELFSNNVVTRPLMEEWLFNTVAFVGGPSEIKYWAELKDVFELFDVEMPIVMPRLRITYLNDRIEKLLSKYNIPLEKVLVDGVEGERSKFIREQASHQFIEKVEGMIEQQRRLNKDLLDEVAGNQNNINLVNKNNEIHIQQYDYLLKRYLLNIERENDISMKQFREIQETLHPMGGLQERIWNPLQILNDFGTDVFKPSTYPPLSYTFDHIIIKP</sequence>
<gene>
    <name evidence="1" type="primary">bshC</name>
    <name type="ordered locus">NWMN_1087</name>
</gene>
<evidence type="ECO:0000255" key="1">
    <source>
        <dbReference type="HAMAP-Rule" id="MF_01867"/>
    </source>
</evidence>
<comment type="function">
    <text evidence="1">Involved in bacillithiol (BSH) biosynthesis. May catalyze the last step of the pathway, the addition of cysteine to glucosamine malate (GlcN-Mal) to generate BSH.</text>
</comment>
<comment type="similarity">
    <text evidence="1">Belongs to the BshC family.</text>
</comment>
<feature type="chain" id="PRO_0000378263" description="Putative cysteine ligase BshC">
    <location>
        <begin position="1"/>
        <end position="537"/>
    </location>
</feature>
<feature type="coiled-coil region" evidence="1">
    <location>
        <begin position="422"/>
        <end position="450"/>
    </location>
</feature>
<accession>A6QG77</accession>
<reference key="1">
    <citation type="journal article" date="2008" name="J. Bacteriol.">
        <title>Genome sequence of Staphylococcus aureus strain Newman and comparative analysis of staphylococcal genomes: polymorphism and evolution of two major pathogenicity islands.</title>
        <authorList>
            <person name="Baba T."/>
            <person name="Bae T."/>
            <person name="Schneewind O."/>
            <person name="Takeuchi F."/>
            <person name="Hiramatsu K."/>
        </authorList>
    </citation>
    <scope>NUCLEOTIDE SEQUENCE [LARGE SCALE GENOMIC DNA]</scope>
    <source>
        <strain>Newman</strain>
    </source>
</reference>
<proteinExistence type="inferred from homology"/>
<protein>
    <recommendedName>
        <fullName evidence="1">Putative cysteine ligase BshC</fullName>
        <ecNumber evidence="1">6.-.-.-</ecNumber>
    </recommendedName>
</protein>
<name>BSHC_STAAE</name>